<keyword id="KW-0535">Nitrogen fixation</keyword>
<keyword id="KW-1185">Reference proteome</keyword>
<dbReference type="EMBL" id="AF003700">
    <property type="protein sequence ID" value="AAC35195.1"/>
    <property type="molecule type" value="Genomic_DNA"/>
</dbReference>
<dbReference type="EMBL" id="CP001287">
    <property type="protein sequence ID" value="ACK65835.1"/>
    <property type="molecule type" value="Genomic_DNA"/>
</dbReference>
<dbReference type="RefSeq" id="WP_012595108.1">
    <property type="nucleotide sequence ID" value="NC_011726.1"/>
</dbReference>
<dbReference type="SMR" id="O07356"/>
<dbReference type="STRING" id="41431.PCC8801_1789"/>
<dbReference type="KEGG" id="cyp:PCC8801_1789"/>
<dbReference type="eggNOG" id="COG2710">
    <property type="taxonomic scope" value="Bacteria"/>
</dbReference>
<dbReference type="HOGENOM" id="CLU_025876_2_0_3"/>
<dbReference type="OrthoDB" id="9800746at2"/>
<dbReference type="UniPathway" id="UPA00782"/>
<dbReference type="Proteomes" id="UP000008204">
    <property type="component" value="Chromosome"/>
</dbReference>
<dbReference type="GO" id="GO:0016163">
    <property type="term" value="F:nitrogenase activity"/>
    <property type="evidence" value="ECO:0007669"/>
    <property type="project" value="InterPro"/>
</dbReference>
<dbReference type="GO" id="GO:0009399">
    <property type="term" value="P:nitrogen fixation"/>
    <property type="evidence" value="ECO:0007669"/>
    <property type="project" value="UniProtKB-KW"/>
</dbReference>
<dbReference type="GO" id="GO:0065003">
    <property type="term" value="P:protein-containing complex assembly"/>
    <property type="evidence" value="ECO:0007669"/>
    <property type="project" value="InterPro"/>
</dbReference>
<dbReference type="CDD" id="cd01966">
    <property type="entry name" value="Nitrogenase_NifN_1"/>
    <property type="match status" value="1"/>
</dbReference>
<dbReference type="Gene3D" id="6.10.250.1090">
    <property type="match status" value="1"/>
</dbReference>
<dbReference type="Gene3D" id="3.40.50.1980">
    <property type="entry name" value="Nitrogenase molybdenum iron protein domain"/>
    <property type="match status" value="3"/>
</dbReference>
<dbReference type="InterPro" id="IPR050152">
    <property type="entry name" value="ChlB/BchB/BchZ"/>
</dbReference>
<dbReference type="InterPro" id="IPR000510">
    <property type="entry name" value="Nase/OxRdtase_comp1"/>
</dbReference>
<dbReference type="InterPro" id="IPR000318">
    <property type="entry name" value="Nase_comp1_CS"/>
</dbReference>
<dbReference type="InterPro" id="IPR005975">
    <property type="entry name" value="Nase_Mo-Fe_CF"/>
</dbReference>
<dbReference type="NCBIfam" id="TIGR01285">
    <property type="entry name" value="nifN"/>
    <property type="match status" value="1"/>
</dbReference>
<dbReference type="PANTHER" id="PTHR33712">
    <property type="entry name" value="LIGHT-INDEPENDENT PROTOCHLOROPHYLLIDE REDUCTASE SUBUNIT B"/>
    <property type="match status" value="1"/>
</dbReference>
<dbReference type="PANTHER" id="PTHR33712:SF7">
    <property type="entry name" value="LIGHT-INDEPENDENT PROTOCHLOROPHYLLIDE REDUCTASE SUBUNIT B"/>
    <property type="match status" value="1"/>
</dbReference>
<dbReference type="Pfam" id="PF00148">
    <property type="entry name" value="Oxidored_nitro"/>
    <property type="match status" value="1"/>
</dbReference>
<dbReference type="SUPFAM" id="SSF53807">
    <property type="entry name" value="Helical backbone' metal receptor"/>
    <property type="match status" value="1"/>
</dbReference>
<dbReference type="PROSITE" id="PS00699">
    <property type="entry name" value="NITROGENASE_1_1"/>
    <property type="match status" value="1"/>
</dbReference>
<proteinExistence type="inferred from homology"/>
<reference key="1">
    <citation type="journal article" date="1999" name="Microbiology">
        <title>Organization and expression of nitrogen-fixation genes in the aerobic nitrogen-fixing unicellular cyanobacterium Synechococcus sp. strain RF-1.</title>
        <authorList>
            <person name="Huang T.-C."/>
            <person name="Lin R.-F."/>
            <person name="Chu M.-K."/>
            <person name="Chen H.-M."/>
        </authorList>
    </citation>
    <scope>NUCLEOTIDE SEQUENCE [GENOMIC DNA]</scope>
</reference>
<reference key="2">
    <citation type="journal article" date="2011" name="MBio">
        <title>Novel metabolic attributes of the genus Cyanothece, comprising a group of unicellular nitrogen-fixing Cyanobacteria.</title>
        <authorList>
            <person name="Bandyopadhyay A."/>
            <person name="Elvitigala T."/>
            <person name="Welsh E."/>
            <person name="Stockel J."/>
            <person name="Liberton M."/>
            <person name="Min H."/>
            <person name="Sherman L.A."/>
            <person name="Pakrasi H.B."/>
        </authorList>
    </citation>
    <scope>NUCLEOTIDE SEQUENCE [LARGE SCALE GENOMIC DNA]</scope>
    <source>
        <strain>PCC 8801 / RF-1</strain>
    </source>
</reference>
<gene>
    <name type="primary">nifN</name>
    <name type="ordered locus">PCC8801_1789</name>
</gene>
<sequence>MTIVLNPKKPLSVNPLKMSQPLGASLAFLGLKGMMPLFHGAQGCTAFAKVVLVRHFRESIPLSTTAMTEVSTILGGQDHVEQAILTIVDKNKPEIIGLLTTGLTETRGDDMEGILKDIRQKHPQLKNLPIVFVSTPDYKGSLQDGYAATVEQIVATDYNAFIAENARSAVIYPQPQVTVLAGSSLSPGDIQEIKSIIEAFGLMPLVIPDLSRSLDGHLEDGYQSITGGGTTLPQLRSLPHSCYTLAIGESMRGAAEILKDRFGTNYEVFPRLAGLEAVDTFLWRLSQIVTSRCDHHFPIVPNIPALFERQRRQLQDAILDTHFYFGGKKVALALEPDLLHQTAWLLTEMGAKIQAAVTTTKSPLLEDLPVDTVTIGDLEDLEDLSAGVDLIITNSHGTAMAQRLNAPLYRMGYPVFDQLGNGQRCLVGYRGTIQFLFDVGNILLAEEANHNHQLSVGVHVT</sequence>
<comment type="function">
    <text>This protein may play a role in the biosynthesis of the prosthetic group of nitrogenase (FeMo cofactor).</text>
</comment>
<comment type="pathway">
    <text>Cofactor biosynthesis; Fe-Mo cofactor biosynthesis.</text>
</comment>
<comment type="similarity">
    <text evidence="1">Belongs to the NifD/NifK/NifE/NifN family.</text>
</comment>
<evidence type="ECO:0000305" key="1"/>
<protein>
    <recommendedName>
        <fullName>Nitrogenase iron-molybdenum cofactor biosynthesis protein NifN</fullName>
    </recommendedName>
</protein>
<organism>
    <name type="scientific">Rippkaea orientalis (strain PCC 8801 / RF-1)</name>
    <name type="common">Cyanothece sp. (strain PCC 8801)</name>
    <dbReference type="NCBI Taxonomy" id="41431"/>
    <lineage>
        <taxon>Bacteria</taxon>
        <taxon>Bacillati</taxon>
        <taxon>Cyanobacteriota</taxon>
        <taxon>Cyanophyceae</taxon>
        <taxon>Oscillatoriophycideae</taxon>
        <taxon>Chroococcales</taxon>
        <taxon>Aphanothecaceae</taxon>
        <taxon>Rippkaea</taxon>
        <taxon>Rippkaea orientalis</taxon>
    </lineage>
</organism>
<accession>O07356</accession>
<accession>B7JWY6</accession>
<name>NIFN_RIPO1</name>
<feature type="chain" id="PRO_0000153134" description="Nitrogenase iron-molybdenum cofactor biosynthesis protein NifN">
    <location>
        <begin position="1"/>
        <end position="461"/>
    </location>
</feature>
<feature type="sequence conflict" description="In Ref. 1; AAC35195." evidence="1" ref="1">
    <original>G</original>
    <variation>C</variation>
    <location>
        <position position="145"/>
    </location>
</feature>
<feature type="sequence conflict" description="In Ref. 1; AAC35195." evidence="1" ref="1">
    <original>I</original>
    <variation>F</variation>
    <location>
        <position position="299"/>
    </location>
</feature>